<evidence type="ECO:0000255" key="1"/>
<evidence type="ECO:0000255" key="2">
    <source>
        <dbReference type="HAMAP-Rule" id="MF_03166"/>
    </source>
</evidence>
<evidence type="ECO:0000269" key="3">
    <source>
    </source>
</evidence>
<evidence type="ECO:0000269" key="4">
    <source>
    </source>
</evidence>
<evidence type="ECO:0000303" key="5">
    <source>
    </source>
</evidence>
<evidence type="ECO:0000305" key="6"/>
<evidence type="ECO:0000312" key="7">
    <source>
        <dbReference type="Araport" id="AT3G18630"/>
    </source>
</evidence>
<evidence type="ECO:0000312" key="8">
    <source>
        <dbReference type="EMBL" id="BAB02221.1"/>
    </source>
</evidence>
<evidence type="ECO:0000312" key="9">
    <source>
        <dbReference type="Proteomes" id="UP000006548"/>
    </source>
</evidence>
<organism evidence="9">
    <name type="scientific">Arabidopsis thaliana</name>
    <name type="common">Mouse-ear cress</name>
    <dbReference type="NCBI Taxonomy" id="3702"/>
    <lineage>
        <taxon>Eukaryota</taxon>
        <taxon>Viridiplantae</taxon>
        <taxon>Streptophyta</taxon>
        <taxon>Embryophyta</taxon>
        <taxon>Tracheophyta</taxon>
        <taxon>Spermatophyta</taxon>
        <taxon>Magnoliopsida</taxon>
        <taxon>eudicotyledons</taxon>
        <taxon>Gunneridae</taxon>
        <taxon>Pentapetalae</taxon>
        <taxon>rosids</taxon>
        <taxon>malvids</taxon>
        <taxon>Brassicales</taxon>
        <taxon>Brassicaceae</taxon>
        <taxon>Camelineae</taxon>
        <taxon>Arabidopsis</taxon>
    </lineage>
</organism>
<name>UNG_ARATH</name>
<comment type="function">
    <text evidence="3 4">Excises uracil residues from the DNA which can arise as a result of misincorporation of dUMP residues by DNA polymerase or due to deamination of cytosine. More active on U:G, U:T and U:C mispairs than on U:A pairs. Highly specific for uracil and no activity with 5-substituted uracil or cytosine derivatives. Required for initiation of base excision repair (BER) of uracil.</text>
</comment>
<comment type="catalytic activity">
    <reaction evidence="4">
        <text>Hydrolyzes single-stranded DNA or mismatched double-stranded DNA and polynucleotides, releasing free uracil.</text>
        <dbReference type="EC" id="3.2.2.27"/>
    </reaction>
</comment>
<comment type="activity regulation">
    <text evidence="4">Inhidited by the small peptide uracil-DNA-glycosylase inhibitor (Ugi).</text>
</comment>
<comment type="subcellular location">
    <subcellularLocation>
        <location evidence="3">Mitochondrion</location>
    </subcellularLocation>
</comment>
<comment type="disruption phenotype">
    <text evidence="4">No visible phenotype under standard growth conditions. Increased resistance to 5-fluorouracil cytotoxicity.</text>
</comment>
<comment type="similarity">
    <text evidence="6">Belongs to the uracil-DNA glycosylase (UDG) superfamily. UNG family.</text>
</comment>
<keyword id="KW-0227">DNA damage</keyword>
<keyword id="KW-0234">DNA repair</keyword>
<keyword id="KW-0378">Hydrolase</keyword>
<keyword id="KW-0496">Mitochondrion</keyword>
<keyword id="KW-1185">Reference proteome</keyword>
<keyword id="KW-0809">Transit peptide</keyword>
<accession>Q9LIH6</accession>
<protein>
    <recommendedName>
        <fullName evidence="5">Uracil-DNA glycosylase, mitochondrial</fullName>
        <shortName evidence="5">AtUNG</shortName>
        <shortName>UDG</shortName>
        <ecNumber evidence="4">3.2.2.27</ecNumber>
    </recommendedName>
</protein>
<gene>
    <name evidence="5" type="primary">UNG</name>
    <name evidence="7" type="ordered locus">At3g18630</name>
    <name evidence="8" type="ORF">K24M9.12</name>
</gene>
<sequence>MASSTPKTLMDFFQPAKRLKASPSSSSFPAVSVAGGSRDLGSVANSPPRVTVTTSVADDSSGLTPEQIARAEFNKFVAKSKRNLAVCSERVTKAKSEGNCYVPLSELLVEESWLKALPGEFHKPYAKSLSDFLEREIITDSKSPLIYPPQHLIFNALNTTPFDRVKTVIIGQDPYHGPGQAMGLSFSVPEGEKLPSSLLNIFKELHKDVGCSIPRHGNLQKWAVQGVLLLNAVLTVRSKQPNSHAKKGWEQFTDAVIQSISQQKEGVVFLLWGRYAQEKSKLIDATKHHILTAAHPSGLSANRGFFDCRHFSRANQLLEEMGIPPIDWQL</sequence>
<proteinExistence type="evidence at protein level"/>
<feature type="transit peptide" description="Mitochondrion" evidence="1">
    <location>
        <begin position="1"/>
        <end position="49"/>
    </location>
</feature>
<feature type="chain" id="PRO_0000433479" description="Uracil-DNA glycosylase, mitochondrial">
    <location>
        <begin position="50"/>
        <end position="330"/>
    </location>
</feature>
<feature type="active site" description="Proton acceptor" evidence="2">
    <location>
        <position position="173"/>
    </location>
</feature>
<feature type="mutagenesis site" description="Strongly reduced glycosylase activity." evidence="4">
    <original>D</original>
    <variation>N</variation>
    <location>
        <position position="173"/>
    </location>
</feature>
<dbReference type="EC" id="3.2.2.27" evidence="4"/>
<dbReference type="EMBL" id="AP001303">
    <property type="protein sequence ID" value="BAB02221.1"/>
    <property type="molecule type" value="Genomic_DNA"/>
</dbReference>
<dbReference type="EMBL" id="CP002686">
    <property type="protein sequence ID" value="AEE76124.1"/>
    <property type="molecule type" value="Genomic_DNA"/>
</dbReference>
<dbReference type="EMBL" id="BT029175">
    <property type="protein sequence ID" value="ABJ17110.1"/>
    <property type="molecule type" value="mRNA"/>
</dbReference>
<dbReference type="EMBL" id="AY084956">
    <property type="protein sequence ID" value="AAM61517.1"/>
    <property type="molecule type" value="mRNA"/>
</dbReference>
<dbReference type="RefSeq" id="NP_188493.1">
    <property type="nucleotide sequence ID" value="NM_112749.5"/>
</dbReference>
<dbReference type="SMR" id="Q9LIH6"/>
<dbReference type="FunCoup" id="Q9LIH6">
    <property type="interactions" value="1588"/>
</dbReference>
<dbReference type="STRING" id="3702.Q9LIH6"/>
<dbReference type="iPTMnet" id="Q9LIH6"/>
<dbReference type="PaxDb" id="3702-AT3G18630.1"/>
<dbReference type="ProteomicsDB" id="245277"/>
<dbReference type="EnsemblPlants" id="AT3G18630.1">
    <property type="protein sequence ID" value="AT3G18630.1"/>
    <property type="gene ID" value="AT3G18630"/>
</dbReference>
<dbReference type="GeneID" id="821394"/>
<dbReference type="Gramene" id="AT3G18630.1">
    <property type="protein sequence ID" value="AT3G18630.1"/>
    <property type="gene ID" value="AT3G18630"/>
</dbReference>
<dbReference type="KEGG" id="ath:AT3G18630"/>
<dbReference type="Araport" id="AT3G18630"/>
<dbReference type="TAIR" id="AT3G18630">
    <property type="gene designation" value="UNG"/>
</dbReference>
<dbReference type="eggNOG" id="KOG2994">
    <property type="taxonomic scope" value="Eukaryota"/>
</dbReference>
<dbReference type="HOGENOM" id="CLU_032162_2_1_1"/>
<dbReference type="InParanoid" id="Q9LIH6"/>
<dbReference type="OMA" id="PDNGYLM"/>
<dbReference type="OrthoDB" id="10031947at2759"/>
<dbReference type="PhylomeDB" id="Q9LIH6"/>
<dbReference type="BRENDA" id="3.2.2.27">
    <property type="organism ID" value="399"/>
</dbReference>
<dbReference type="PRO" id="PR:Q9LIH6"/>
<dbReference type="Proteomes" id="UP000006548">
    <property type="component" value="Chromosome 3"/>
</dbReference>
<dbReference type="ExpressionAtlas" id="Q9LIH6">
    <property type="expression patterns" value="baseline and differential"/>
</dbReference>
<dbReference type="GO" id="GO:0005739">
    <property type="term" value="C:mitochondrion"/>
    <property type="evidence" value="ECO:0000314"/>
    <property type="project" value="TAIR"/>
</dbReference>
<dbReference type="GO" id="GO:0005634">
    <property type="term" value="C:nucleus"/>
    <property type="evidence" value="ECO:0007669"/>
    <property type="project" value="UniProtKB-UniRule"/>
</dbReference>
<dbReference type="GO" id="GO:0004844">
    <property type="term" value="F:uracil DNA N-glycosylase activity"/>
    <property type="evidence" value="ECO:0000314"/>
    <property type="project" value="TAIR"/>
</dbReference>
<dbReference type="GO" id="GO:0006284">
    <property type="term" value="P:base-excision repair"/>
    <property type="evidence" value="ECO:0007669"/>
    <property type="project" value="UniProtKB-UniRule"/>
</dbReference>
<dbReference type="CDD" id="cd10027">
    <property type="entry name" value="UDG-F1-like"/>
    <property type="match status" value="1"/>
</dbReference>
<dbReference type="FunFam" id="3.40.470.10:FF:000001">
    <property type="entry name" value="Uracil-DNA glycosylase"/>
    <property type="match status" value="1"/>
</dbReference>
<dbReference type="Gene3D" id="3.40.470.10">
    <property type="entry name" value="Uracil-DNA glycosylase-like domain"/>
    <property type="match status" value="1"/>
</dbReference>
<dbReference type="HAMAP" id="MF_00148">
    <property type="entry name" value="UDG"/>
    <property type="match status" value="1"/>
</dbReference>
<dbReference type="InterPro" id="IPR002043">
    <property type="entry name" value="UDG_fam1"/>
</dbReference>
<dbReference type="InterPro" id="IPR005122">
    <property type="entry name" value="Uracil-DNA_glycosylase-like"/>
</dbReference>
<dbReference type="InterPro" id="IPR036895">
    <property type="entry name" value="Uracil-DNA_glycosylase-like_sf"/>
</dbReference>
<dbReference type="NCBIfam" id="NF003588">
    <property type="entry name" value="PRK05254.1-1"/>
    <property type="match status" value="1"/>
</dbReference>
<dbReference type="NCBIfam" id="NF003589">
    <property type="entry name" value="PRK05254.1-2"/>
    <property type="match status" value="1"/>
</dbReference>
<dbReference type="NCBIfam" id="NF003591">
    <property type="entry name" value="PRK05254.1-4"/>
    <property type="match status" value="1"/>
</dbReference>
<dbReference type="NCBIfam" id="NF003592">
    <property type="entry name" value="PRK05254.1-5"/>
    <property type="match status" value="1"/>
</dbReference>
<dbReference type="NCBIfam" id="TIGR00628">
    <property type="entry name" value="ung"/>
    <property type="match status" value="1"/>
</dbReference>
<dbReference type="PANTHER" id="PTHR11264">
    <property type="entry name" value="URACIL-DNA GLYCOSYLASE"/>
    <property type="match status" value="1"/>
</dbReference>
<dbReference type="PANTHER" id="PTHR11264:SF0">
    <property type="entry name" value="URACIL-DNA GLYCOSYLASE"/>
    <property type="match status" value="1"/>
</dbReference>
<dbReference type="Pfam" id="PF03167">
    <property type="entry name" value="UDG"/>
    <property type="match status" value="1"/>
</dbReference>
<dbReference type="SMART" id="SM00986">
    <property type="entry name" value="UDG"/>
    <property type="match status" value="1"/>
</dbReference>
<dbReference type="SMART" id="SM00987">
    <property type="entry name" value="UreE_C"/>
    <property type="match status" value="1"/>
</dbReference>
<dbReference type="SUPFAM" id="SSF52141">
    <property type="entry name" value="Uracil-DNA glycosylase-like"/>
    <property type="match status" value="1"/>
</dbReference>
<reference key="1">
    <citation type="journal article" date="2010" name="J. Biol. Chem.">
        <title>Arabidopsis uracil DNA glycosylase (UNG) is required for base excision repair of uracil and increases plant sensitivity to 5-fluorouracil.</title>
        <authorList>
            <person name="Cordoba-Canero D."/>
            <person name="Dubois E."/>
            <person name="Ariza R.R."/>
            <person name="Doutriaux M.P."/>
            <person name="Roldan-Arjona T."/>
        </authorList>
    </citation>
    <scope>NUCLEOTIDE SEQUENCE [MRNA]</scope>
    <scope>FUNCTION</scope>
    <scope>MUTAGENESIS OF ASP-173</scope>
    <scope>CATALYTIC ACTIVITY</scope>
    <scope>ACTIVITY REGULATION</scope>
    <scope>DISRUPTION PHENOTYPE</scope>
    <source>
        <strain>cv. Columbia</strain>
    </source>
</reference>
<reference key="2">
    <citation type="journal article" date="2000" name="DNA Res.">
        <title>Structural analysis of Arabidopsis thaliana chromosome 3. II. Sequence features of the 4,251,695 bp regions covered by 90 P1, TAC and BAC clones.</title>
        <authorList>
            <person name="Kaneko T."/>
            <person name="Katoh T."/>
            <person name="Sato S."/>
            <person name="Nakamura Y."/>
            <person name="Asamizu E."/>
            <person name="Tabata S."/>
        </authorList>
    </citation>
    <scope>NUCLEOTIDE SEQUENCE [LARGE SCALE GENOMIC DNA]</scope>
    <source>
        <strain>cv. Columbia</strain>
    </source>
</reference>
<reference key="3">
    <citation type="journal article" date="2017" name="Plant J.">
        <title>Araport11: a complete reannotation of the Arabidopsis thaliana reference genome.</title>
        <authorList>
            <person name="Cheng C.Y."/>
            <person name="Krishnakumar V."/>
            <person name="Chan A.P."/>
            <person name="Thibaud-Nissen F."/>
            <person name="Schobel S."/>
            <person name="Town C.D."/>
        </authorList>
    </citation>
    <scope>GENOME REANNOTATION</scope>
    <source>
        <strain>cv. Columbia</strain>
    </source>
</reference>
<reference key="4">
    <citation type="submission" date="2006-10" db="EMBL/GenBank/DDBJ databases">
        <title>Arabidopsis ORF Clones.</title>
        <authorList>
            <person name="Quinitio C."/>
            <person name="Chen H."/>
            <person name="Kim C.J."/>
            <person name="Shinn P."/>
            <person name="Ecker J.R."/>
        </authorList>
    </citation>
    <scope>NUCLEOTIDE SEQUENCE [LARGE SCALE MRNA]</scope>
    <source>
        <strain>cv. Columbia</strain>
    </source>
</reference>
<reference key="5">
    <citation type="submission" date="2002-03" db="EMBL/GenBank/DDBJ databases">
        <title>Full-length cDNA from Arabidopsis thaliana.</title>
        <authorList>
            <person name="Brover V.V."/>
            <person name="Troukhan M.E."/>
            <person name="Alexandrov N.A."/>
            <person name="Lu Y.-P."/>
            <person name="Flavell R.B."/>
            <person name="Feldmann K.A."/>
        </authorList>
    </citation>
    <scope>NUCLEOTIDE SEQUENCE [LARGE SCALE MRNA]</scope>
</reference>
<reference key="6">
    <citation type="journal article" date="2009" name="Nucleic Acids Res.">
        <title>Plant mitochondria possess a short-patch base excision DNA repair pathway.</title>
        <authorList>
            <person name="Boesch P."/>
            <person name="Ibrahim N."/>
            <person name="Paulus F."/>
            <person name="Cosset A."/>
            <person name="Tarasenko V."/>
            <person name="Dietrich A."/>
        </authorList>
    </citation>
    <scope>FUNCTION</scope>
    <scope>SUBCELLULAR LOCATION</scope>
    <source>
        <strain>cv. Columbia</strain>
    </source>
</reference>